<feature type="peptide" id="PRO_0000312899" description="thr operon leader peptide">
    <location>
        <begin position="1"/>
        <end position="22"/>
    </location>
</feature>
<accession>P0C5Z6</accession>
<evidence type="ECO:0000255" key="1">
    <source>
        <dbReference type="HAMAP-Rule" id="MF_01907"/>
    </source>
</evidence>
<dbReference type="EMBL" id="CP000305">
    <property type="status" value="NOT_ANNOTATED_CDS"/>
    <property type="molecule type" value="Genomic_DNA"/>
</dbReference>
<dbReference type="RefSeq" id="WP_002231504.1">
    <property type="nucleotide sequence ID" value="NZ_ACNQ01000006.1"/>
</dbReference>
<dbReference type="GeneID" id="96666390"/>
<dbReference type="Proteomes" id="UP000008936">
    <property type="component" value="Chromosome"/>
</dbReference>
<dbReference type="GO" id="GO:0009088">
    <property type="term" value="P:threonine biosynthetic process"/>
    <property type="evidence" value="ECO:0007669"/>
    <property type="project" value="UniProtKB-UniRule"/>
</dbReference>
<dbReference type="GO" id="GO:0031556">
    <property type="term" value="P:transcriptional attenuation by ribosome"/>
    <property type="evidence" value="ECO:0007669"/>
    <property type="project" value="UniProtKB-UniRule"/>
</dbReference>
<dbReference type="HAMAP" id="MF_01907">
    <property type="entry name" value="Leader_Thr"/>
    <property type="match status" value="1"/>
</dbReference>
<dbReference type="InterPro" id="IPR011720">
    <property type="entry name" value="Thr_lead_pept"/>
</dbReference>
<dbReference type="NCBIfam" id="TIGR02077">
    <property type="entry name" value="thr_lead_pep"/>
    <property type="match status" value="1"/>
</dbReference>
<dbReference type="Pfam" id="PF08254">
    <property type="entry name" value="Leader_Thr"/>
    <property type="match status" value="1"/>
</dbReference>
<gene>
    <name evidence="1" type="primary">thrL</name>
    <name type="ordered locus">YPN_0330.1</name>
</gene>
<proteinExistence type="inferred from homology"/>
<reference key="1">
    <citation type="journal article" date="2006" name="J. Bacteriol.">
        <title>Complete genome sequence of Yersinia pestis strains Antiqua and Nepal516: evidence of gene reduction in an emerging pathogen.</title>
        <authorList>
            <person name="Chain P.S.G."/>
            <person name="Hu P."/>
            <person name="Malfatti S.A."/>
            <person name="Radnedge L."/>
            <person name="Larimer F."/>
            <person name="Vergez L.M."/>
            <person name="Worsham P."/>
            <person name="Chu M.C."/>
            <person name="Andersen G.L."/>
        </authorList>
    </citation>
    <scope>NUCLEOTIDE SEQUENCE [LARGE SCALE GENOMIC DNA]</scope>
    <source>
        <strain>Nepal516</strain>
    </source>
</reference>
<protein>
    <recommendedName>
        <fullName evidence="1">thr operon leader peptide</fullName>
    </recommendedName>
    <alternativeName>
        <fullName evidence="1">thr operon attenuator</fullName>
    </alternativeName>
</protein>
<keyword id="KW-0028">Amino-acid biosynthesis</keyword>
<keyword id="KW-0428">Leader peptide</keyword>
<keyword id="KW-0791">Threonine biosynthesis</keyword>
<sequence length="22" mass="2365">MRYISLNTTIITTTETTGYGAG</sequence>
<comment type="function">
    <text evidence="1">This protein is involved in control of the biosynthesis of threonine.</text>
</comment>
<comment type="similarity">
    <text evidence="1">Belongs to the thr operon leader peptide family.</text>
</comment>
<organism>
    <name type="scientific">Yersinia pestis bv. Antiqua (strain Nepal516)</name>
    <dbReference type="NCBI Taxonomy" id="377628"/>
    <lineage>
        <taxon>Bacteria</taxon>
        <taxon>Pseudomonadati</taxon>
        <taxon>Pseudomonadota</taxon>
        <taxon>Gammaproteobacteria</taxon>
        <taxon>Enterobacterales</taxon>
        <taxon>Yersiniaceae</taxon>
        <taxon>Yersinia</taxon>
    </lineage>
</organism>
<name>LPT_YERPN</name>